<feature type="chain" id="PRO_0000121466" description="DNA-directed RNA polymerase II subunit RPB9">
    <location>
        <begin position="1"/>
        <end position="122"/>
    </location>
</feature>
<feature type="zinc finger region" description="C4-type" evidence="3">
    <location>
        <begin position="7"/>
        <end position="32"/>
    </location>
</feature>
<feature type="zinc finger region" description="TFIIS-type" evidence="4">
    <location>
        <begin position="71"/>
        <end position="111"/>
    </location>
</feature>
<feature type="binding site" evidence="5">
    <location>
        <position position="7"/>
    </location>
    <ligand>
        <name>Zn(2+)</name>
        <dbReference type="ChEBI" id="CHEBI:29105"/>
        <label>1</label>
    </ligand>
</feature>
<feature type="binding site" evidence="5">
    <location>
        <position position="10"/>
    </location>
    <ligand>
        <name>Zn(2+)</name>
        <dbReference type="ChEBI" id="CHEBI:29105"/>
        <label>1</label>
    </ligand>
</feature>
<feature type="binding site" evidence="5">
    <location>
        <position position="29"/>
    </location>
    <ligand>
        <name>Zn(2+)</name>
        <dbReference type="ChEBI" id="CHEBI:29105"/>
        <label>1</label>
    </ligand>
</feature>
<feature type="binding site" evidence="5">
    <location>
        <position position="32"/>
    </location>
    <ligand>
        <name>Zn(2+)</name>
        <dbReference type="ChEBI" id="CHEBI:29105"/>
        <label>1</label>
    </ligand>
</feature>
<feature type="binding site" evidence="4">
    <location>
        <position position="75"/>
    </location>
    <ligand>
        <name>Zn(2+)</name>
        <dbReference type="ChEBI" id="CHEBI:29105"/>
        <label>2</label>
    </ligand>
</feature>
<feature type="binding site" evidence="4">
    <location>
        <position position="78"/>
    </location>
    <ligand>
        <name>Zn(2+)</name>
        <dbReference type="ChEBI" id="CHEBI:29105"/>
        <label>2</label>
    </ligand>
</feature>
<feature type="binding site" evidence="4">
    <location>
        <position position="103"/>
    </location>
    <ligand>
        <name>Zn(2+)</name>
        <dbReference type="ChEBI" id="CHEBI:29105"/>
        <label>2</label>
    </ligand>
</feature>
<feature type="binding site" evidence="4">
    <location>
        <position position="106"/>
    </location>
    <ligand>
        <name>Zn(2+)</name>
        <dbReference type="ChEBI" id="CHEBI:29105"/>
        <label>2</label>
    </ligand>
</feature>
<reference key="1">
    <citation type="journal article" date="2004" name="Science">
        <title>The Ashbya gossypii genome as a tool for mapping the ancient Saccharomyces cerevisiae genome.</title>
        <authorList>
            <person name="Dietrich F.S."/>
            <person name="Voegeli S."/>
            <person name="Brachat S."/>
            <person name="Lerch A."/>
            <person name="Gates K."/>
            <person name="Steiner S."/>
            <person name="Mohr C."/>
            <person name="Poehlmann R."/>
            <person name="Luedi P."/>
            <person name="Choi S."/>
            <person name="Wing R.A."/>
            <person name="Flavier A."/>
            <person name="Gaffney T.D."/>
            <person name="Philippsen P."/>
        </authorList>
    </citation>
    <scope>NUCLEOTIDE SEQUENCE [LARGE SCALE GENOMIC DNA]</scope>
    <source>
        <strain>ATCC 10895 / CBS 109.51 / FGSC 9923 / NRRL Y-1056</strain>
    </source>
</reference>
<reference key="2">
    <citation type="journal article" date="2013" name="G3 (Bethesda)">
        <title>Genomes of Ashbya fungi isolated from insects reveal four mating-type loci, numerous translocations, lack of transposons, and distinct gene duplications.</title>
        <authorList>
            <person name="Dietrich F.S."/>
            <person name="Voegeli S."/>
            <person name="Kuo S."/>
            <person name="Philippsen P."/>
        </authorList>
    </citation>
    <scope>GENOME REANNOTATION</scope>
    <source>
        <strain>ATCC 10895 / CBS 109.51 / FGSC 9923 / NRRL Y-1056</strain>
    </source>
</reference>
<comment type="function">
    <text evidence="1">DNA-dependent RNA polymerase catalyzes the transcription of DNA into RNA using the four ribonucleoside triphosphates as substrates. Component of RNA polymerase II which synthesizes mRNA precursors and many functional non-coding RNAs. Pol II is the central component of the basal RNA polymerase II transcription machinery. It is composed of mobile elements that move relative to each other. RPB9 is part of the upper jaw surrounding the central large cleft and thought to grab the incoming DNA template. Involved in the regulation of transcription elongation (By similarity).</text>
</comment>
<comment type="subunit">
    <text evidence="1">Component of the RNA polymerase II (Pol II) complex consisting of 12 subunits.</text>
</comment>
<comment type="subcellular location">
    <subcellularLocation>
        <location evidence="2">Nucleus</location>
        <location evidence="2">Nucleolus</location>
    </subcellularLocation>
</comment>
<comment type="similarity">
    <text evidence="6">Belongs to the archaeal RpoM/eukaryotic RPA12/RPB9/RPC11 RNA polymerase family.</text>
</comment>
<proteinExistence type="inferred from homology"/>
<evidence type="ECO:0000250" key="1"/>
<evidence type="ECO:0000250" key="2">
    <source>
        <dbReference type="UniProtKB" id="P32529"/>
    </source>
</evidence>
<evidence type="ECO:0000255" key="3"/>
<evidence type="ECO:0000255" key="4">
    <source>
        <dbReference type="PROSITE-ProRule" id="PRU00472"/>
    </source>
</evidence>
<evidence type="ECO:0000255" key="5">
    <source>
        <dbReference type="PROSITE-ProRule" id="PRU10145"/>
    </source>
</evidence>
<evidence type="ECO:0000305" key="6"/>
<organism>
    <name type="scientific">Eremothecium gossypii (strain ATCC 10895 / CBS 109.51 / FGSC 9923 / NRRL Y-1056)</name>
    <name type="common">Yeast</name>
    <name type="synonym">Ashbya gossypii</name>
    <dbReference type="NCBI Taxonomy" id="284811"/>
    <lineage>
        <taxon>Eukaryota</taxon>
        <taxon>Fungi</taxon>
        <taxon>Dikarya</taxon>
        <taxon>Ascomycota</taxon>
        <taxon>Saccharomycotina</taxon>
        <taxon>Saccharomycetes</taxon>
        <taxon>Saccharomycetales</taxon>
        <taxon>Saccharomycetaceae</taxon>
        <taxon>Eremothecium</taxon>
    </lineage>
</organism>
<keyword id="KW-0240">DNA-directed RNA polymerase</keyword>
<keyword id="KW-0479">Metal-binding</keyword>
<keyword id="KW-0539">Nucleus</keyword>
<keyword id="KW-1185">Reference proteome</keyword>
<keyword id="KW-0804">Transcription</keyword>
<keyword id="KW-0862">Zinc</keyword>
<keyword id="KW-0863">Zinc-finger</keyword>
<sequence length="122" mass="14283">MTTFRFCRDCNNMLYPREDKEEQRLLFECRTCTYAEEAGTPLVYRHELITNIGETAGVVQDIGSDPTLPRSDRECPRCHSHDNVFFQSQQRRRDTSMVLFFVCLGCSHIFTSDQKNKRTTFS</sequence>
<dbReference type="EMBL" id="AE016819">
    <property type="protein sequence ID" value="AAS53284.1"/>
    <property type="molecule type" value="Genomic_DNA"/>
</dbReference>
<dbReference type="RefSeq" id="NP_985460.1">
    <property type="nucleotide sequence ID" value="NM_210814.1"/>
</dbReference>
<dbReference type="SMR" id="Q755B3"/>
<dbReference type="FunCoup" id="Q755B3">
    <property type="interactions" value="400"/>
</dbReference>
<dbReference type="STRING" id="284811.Q755B3"/>
<dbReference type="EnsemblFungi" id="AAS53284">
    <property type="protein sequence ID" value="AAS53284"/>
    <property type="gene ID" value="AGOS_AFL088W"/>
</dbReference>
<dbReference type="GeneID" id="4621687"/>
<dbReference type="KEGG" id="ago:AGOS_AFL088W"/>
<dbReference type="eggNOG" id="KOG2691">
    <property type="taxonomic scope" value="Eukaryota"/>
</dbReference>
<dbReference type="HOGENOM" id="CLU_093932_0_1_1"/>
<dbReference type="InParanoid" id="Q755B3"/>
<dbReference type="OMA" id="DTSMVLF"/>
<dbReference type="OrthoDB" id="282270at2759"/>
<dbReference type="Proteomes" id="UP000000591">
    <property type="component" value="Chromosome VI"/>
</dbReference>
<dbReference type="GO" id="GO:0005730">
    <property type="term" value="C:nucleolus"/>
    <property type="evidence" value="ECO:0007669"/>
    <property type="project" value="UniProtKB-SubCell"/>
</dbReference>
<dbReference type="GO" id="GO:0005665">
    <property type="term" value="C:RNA polymerase II, core complex"/>
    <property type="evidence" value="ECO:0000318"/>
    <property type="project" value="GO_Central"/>
</dbReference>
<dbReference type="GO" id="GO:0003899">
    <property type="term" value="F:DNA-directed RNA polymerase activity"/>
    <property type="evidence" value="ECO:0007669"/>
    <property type="project" value="InterPro"/>
</dbReference>
<dbReference type="GO" id="GO:0003676">
    <property type="term" value="F:nucleic acid binding"/>
    <property type="evidence" value="ECO:0007669"/>
    <property type="project" value="InterPro"/>
</dbReference>
<dbReference type="GO" id="GO:0003968">
    <property type="term" value="F:RNA-directed RNA polymerase activity"/>
    <property type="evidence" value="ECO:0007669"/>
    <property type="project" value="EnsemblFungi"/>
</dbReference>
<dbReference type="GO" id="GO:0008270">
    <property type="term" value="F:zinc ion binding"/>
    <property type="evidence" value="ECO:0007669"/>
    <property type="project" value="UniProtKB-KW"/>
</dbReference>
<dbReference type="GO" id="GO:0001193">
    <property type="term" value="P:maintenance of transcriptional fidelity during transcription elongation by RNA polymerase II"/>
    <property type="evidence" value="ECO:0000318"/>
    <property type="project" value="GO_Central"/>
</dbReference>
<dbReference type="GO" id="GO:0006367">
    <property type="term" value="P:transcription initiation at RNA polymerase II promoter"/>
    <property type="evidence" value="ECO:0000318"/>
    <property type="project" value="GO_Central"/>
</dbReference>
<dbReference type="GO" id="GO:0006283">
    <property type="term" value="P:transcription-coupled nucleotide-excision repair"/>
    <property type="evidence" value="ECO:0000318"/>
    <property type="project" value="GO_Central"/>
</dbReference>
<dbReference type="CDD" id="cd10508">
    <property type="entry name" value="Zn-ribbon_RPB9"/>
    <property type="match status" value="1"/>
</dbReference>
<dbReference type="FunFam" id="2.20.25.10:FF:000008">
    <property type="entry name" value="DNA-directed RNA polymerase II subunit RPB9"/>
    <property type="match status" value="1"/>
</dbReference>
<dbReference type="FunFam" id="2.20.25.10:FF:000016">
    <property type="entry name" value="DNA-directed RNA polymerase II subunit RPB9"/>
    <property type="match status" value="1"/>
</dbReference>
<dbReference type="Gene3D" id="2.20.25.10">
    <property type="match status" value="2"/>
</dbReference>
<dbReference type="InterPro" id="IPR019761">
    <property type="entry name" value="DNA-dir_RNA_pol-M_15_CS"/>
</dbReference>
<dbReference type="InterPro" id="IPR012164">
    <property type="entry name" value="Rpa12/Rpb9/Rpc10/TFS"/>
</dbReference>
<dbReference type="InterPro" id="IPR001529">
    <property type="entry name" value="Zn_ribbon_RPB9"/>
</dbReference>
<dbReference type="InterPro" id="IPR034012">
    <property type="entry name" value="Zn_ribbon_RPB9_C"/>
</dbReference>
<dbReference type="InterPro" id="IPR001222">
    <property type="entry name" value="Znf_TFIIS"/>
</dbReference>
<dbReference type="PANTHER" id="PTHR11239">
    <property type="entry name" value="DNA-DIRECTED RNA POLYMERASE"/>
    <property type="match status" value="1"/>
</dbReference>
<dbReference type="PANTHER" id="PTHR11239:SF1">
    <property type="entry name" value="DNA-DIRECTED RNA POLYMERASE II SUBUNIT RPB9"/>
    <property type="match status" value="1"/>
</dbReference>
<dbReference type="Pfam" id="PF02150">
    <property type="entry name" value="Zn_ribbon_RPB9"/>
    <property type="match status" value="1"/>
</dbReference>
<dbReference type="Pfam" id="PF01096">
    <property type="entry name" value="Zn_ribbon_TFIIS"/>
    <property type="match status" value="1"/>
</dbReference>
<dbReference type="PIRSF" id="PIRSF005586">
    <property type="entry name" value="RNApol_RpoM"/>
    <property type="match status" value="1"/>
</dbReference>
<dbReference type="SMART" id="SM00661">
    <property type="entry name" value="RPOL9"/>
    <property type="match status" value="1"/>
</dbReference>
<dbReference type="SMART" id="SM00440">
    <property type="entry name" value="ZnF_C2C2"/>
    <property type="match status" value="1"/>
</dbReference>
<dbReference type="SUPFAM" id="SSF57783">
    <property type="entry name" value="Zinc beta-ribbon"/>
    <property type="match status" value="2"/>
</dbReference>
<dbReference type="PROSITE" id="PS01030">
    <property type="entry name" value="RNA_POL_M_15KD"/>
    <property type="match status" value="1"/>
</dbReference>
<dbReference type="PROSITE" id="PS00466">
    <property type="entry name" value="ZF_TFIIS_1"/>
    <property type="match status" value="1"/>
</dbReference>
<dbReference type="PROSITE" id="PS51133">
    <property type="entry name" value="ZF_TFIIS_2"/>
    <property type="match status" value="1"/>
</dbReference>
<accession>Q755B3</accession>
<name>RPB9_EREGS</name>
<protein>
    <recommendedName>
        <fullName>DNA-directed RNA polymerase II subunit RPB9</fullName>
        <shortName>RNA polymerase II subunit B9</shortName>
    </recommendedName>
    <alternativeName>
        <fullName>DNA-directed RNA polymerase II subunit 9</fullName>
    </alternativeName>
</protein>
<gene>
    <name type="primary">RPB9</name>
    <name type="ordered locus">AFL088W</name>
</gene>